<organism>
    <name type="scientific">Dictyostelium discoideum</name>
    <name type="common">Social amoeba</name>
    <dbReference type="NCBI Taxonomy" id="44689"/>
    <lineage>
        <taxon>Eukaryota</taxon>
        <taxon>Amoebozoa</taxon>
        <taxon>Evosea</taxon>
        <taxon>Eumycetozoa</taxon>
        <taxon>Dictyostelia</taxon>
        <taxon>Dictyosteliales</taxon>
        <taxon>Dictyosteliaceae</taxon>
        <taxon>Dictyostelium</taxon>
    </lineage>
</organism>
<reference key="1">
    <citation type="journal article" date="2005" name="Nature">
        <title>The genome of the social amoeba Dictyostelium discoideum.</title>
        <authorList>
            <person name="Eichinger L."/>
            <person name="Pachebat J.A."/>
            <person name="Gloeckner G."/>
            <person name="Rajandream M.A."/>
            <person name="Sucgang R."/>
            <person name="Berriman M."/>
            <person name="Song J."/>
            <person name="Olsen R."/>
            <person name="Szafranski K."/>
            <person name="Xu Q."/>
            <person name="Tunggal B."/>
            <person name="Kummerfeld S."/>
            <person name="Madera M."/>
            <person name="Konfortov B.A."/>
            <person name="Rivero F."/>
            <person name="Bankier A.T."/>
            <person name="Lehmann R."/>
            <person name="Hamlin N."/>
            <person name="Davies R."/>
            <person name="Gaudet P."/>
            <person name="Fey P."/>
            <person name="Pilcher K."/>
            <person name="Chen G."/>
            <person name="Saunders D."/>
            <person name="Sodergren E.J."/>
            <person name="Davis P."/>
            <person name="Kerhornou A."/>
            <person name="Nie X."/>
            <person name="Hall N."/>
            <person name="Anjard C."/>
            <person name="Hemphill L."/>
            <person name="Bason N."/>
            <person name="Farbrother P."/>
            <person name="Desany B."/>
            <person name="Just E."/>
            <person name="Morio T."/>
            <person name="Rost R."/>
            <person name="Churcher C.M."/>
            <person name="Cooper J."/>
            <person name="Haydock S."/>
            <person name="van Driessche N."/>
            <person name="Cronin A."/>
            <person name="Goodhead I."/>
            <person name="Muzny D.M."/>
            <person name="Mourier T."/>
            <person name="Pain A."/>
            <person name="Lu M."/>
            <person name="Harper D."/>
            <person name="Lindsay R."/>
            <person name="Hauser H."/>
            <person name="James K.D."/>
            <person name="Quiles M."/>
            <person name="Madan Babu M."/>
            <person name="Saito T."/>
            <person name="Buchrieser C."/>
            <person name="Wardroper A."/>
            <person name="Felder M."/>
            <person name="Thangavelu M."/>
            <person name="Johnson D."/>
            <person name="Knights A."/>
            <person name="Loulseged H."/>
            <person name="Mungall K.L."/>
            <person name="Oliver K."/>
            <person name="Price C."/>
            <person name="Quail M.A."/>
            <person name="Urushihara H."/>
            <person name="Hernandez J."/>
            <person name="Rabbinowitsch E."/>
            <person name="Steffen D."/>
            <person name="Sanders M."/>
            <person name="Ma J."/>
            <person name="Kohara Y."/>
            <person name="Sharp S."/>
            <person name="Simmonds M.N."/>
            <person name="Spiegler S."/>
            <person name="Tivey A."/>
            <person name="Sugano S."/>
            <person name="White B."/>
            <person name="Walker D."/>
            <person name="Woodward J.R."/>
            <person name="Winckler T."/>
            <person name="Tanaka Y."/>
            <person name="Shaulsky G."/>
            <person name="Schleicher M."/>
            <person name="Weinstock G.M."/>
            <person name="Rosenthal A."/>
            <person name="Cox E.C."/>
            <person name="Chisholm R.L."/>
            <person name="Gibbs R.A."/>
            <person name="Loomis W.F."/>
            <person name="Platzer M."/>
            <person name="Kay R.R."/>
            <person name="Williams J.G."/>
            <person name="Dear P.H."/>
            <person name="Noegel A.A."/>
            <person name="Barrell B.G."/>
            <person name="Kuspa A."/>
        </authorList>
    </citation>
    <scope>NUCLEOTIDE SEQUENCE [LARGE SCALE GENOMIC DNA]</scope>
    <source>
        <strain>AX4</strain>
    </source>
</reference>
<accession>Q55FC3</accession>
<gene>
    <name type="primary">hssl8</name>
    <name type="ORF">DDB_G0268174</name>
</gene>
<dbReference type="EMBL" id="AAFI02000003">
    <property type="protein sequence ID" value="EAL73540.1"/>
    <property type="molecule type" value="Genomic_DNA"/>
</dbReference>
<dbReference type="RefSeq" id="XP_647610.1">
    <property type="nucleotide sequence ID" value="XM_642518.1"/>
</dbReference>
<dbReference type="FunCoup" id="Q55FC3">
    <property type="interactions" value="243"/>
</dbReference>
<dbReference type="PaxDb" id="44689-DDB0252794"/>
<dbReference type="EnsemblProtists" id="EAL73540">
    <property type="protein sequence ID" value="EAL73540"/>
    <property type="gene ID" value="DDB_G0268174"/>
</dbReference>
<dbReference type="GeneID" id="8616422"/>
<dbReference type="KEGG" id="ddi:DDB_G0268174"/>
<dbReference type="dictyBase" id="DDB_G0268174"/>
<dbReference type="HOGENOM" id="CLU_181850_1_0_1"/>
<dbReference type="InParanoid" id="Q55FC3"/>
<dbReference type="PhylomeDB" id="Q55FC3"/>
<dbReference type="PRO" id="PR:Q55FC3"/>
<dbReference type="Proteomes" id="UP000002195">
    <property type="component" value="Chromosome 1"/>
</dbReference>
<dbReference type="GO" id="GO:0030587">
    <property type="term" value="P:sorocarp development"/>
    <property type="evidence" value="ECO:0000318"/>
    <property type="project" value="GO_Central"/>
</dbReference>
<dbReference type="InterPro" id="IPR050533">
    <property type="entry name" value="HssA/B-like_chaperone"/>
</dbReference>
<dbReference type="InterPro" id="IPR008455">
    <property type="entry name" value="HssA/B-related"/>
</dbReference>
<dbReference type="PANTHER" id="PTHR31059">
    <property type="entry name" value="HSSA/B-LIKE PROTEIN 1-RELATED-RELATED"/>
    <property type="match status" value="1"/>
</dbReference>
<dbReference type="PANTHER" id="PTHR31059:SF5">
    <property type="entry name" value="HSSA_B-LIKE PROTEIN 1-RELATED"/>
    <property type="match status" value="1"/>
</dbReference>
<dbReference type="Pfam" id="PF05710">
    <property type="entry name" value="Coiled"/>
    <property type="match status" value="1"/>
</dbReference>
<evidence type="ECO:0000256" key="1">
    <source>
        <dbReference type="SAM" id="MobiDB-lite"/>
    </source>
</evidence>
<evidence type="ECO:0000305" key="2"/>
<keyword id="KW-1185">Reference proteome</keyword>
<proteinExistence type="inferred from homology"/>
<protein>
    <recommendedName>
        <fullName>HssA/B-like protein 8</fullName>
    </recommendedName>
</protein>
<comment type="similarity">
    <text evidence="2">Belongs to the hssA/B family.</text>
</comment>
<feature type="chain" id="PRO_0000330378" description="HssA/B-like protein 8">
    <location>
        <begin position="1"/>
        <end position="87"/>
    </location>
</feature>
<feature type="region of interest" description="Disordered" evidence="1">
    <location>
        <begin position="1"/>
        <end position="24"/>
    </location>
</feature>
<feature type="compositionally biased region" description="Polar residues" evidence="1">
    <location>
        <begin position="1"/>
        <end position="22"/>
    </location>
</feature>
<sequence length="87" mass="8745">MSILSALTSISNPMKSTKSSVANGGGRLSMGSNSVACGSCGGGNSSSGTINNADGSQTTYYSYTSPVYTYNYSYSYSSSGSSSCGCH</sequence>
<name>HSL8_DICDI</name>